<accession>A7MS85</accession>
<protein>
    <recommendedName>
        <fullName evidence="1">Uracil-DNA glycosylase</fullName>
        <shortName evidence="1">UDG</shortName>
        <ecNumber evidence="1">3.2.2.27</ecNumber>
    </recommendedName>
</protein>
<evidence type="ECO:0000255" key="1">
    <source>
        <dbReference type="HAMAP-Rule" id="MF_00148"/>
    </source>
</evidence>
<reference key="1">
    <citation type="submission" date="2007-08" db="EMBL/GenBank/DDBJ databases">
        <authorList>
            <consortium name="The Vibrio harveyi Genome Sequencing Project"/>
            <person name="Bassler B."/>
            <person name="Clifton S.W."/>
            <person name="Fulton L."/>
            <person name="Delehaunty K."/>
            <person name="Fronick C."/>
            <person name="Harrison M."/>
            <person name="Markivic C."/>
            <person name="Fulton R."/>
            <person name="Tin-Wollam A.-M."/>
            <person name="Shah N."/>
            <person name="Pepin K."/>
            <person name="Nash W."/>
            <person name="Thiruvilangam P."/>
            <person name="Bhonagiri V."/>
            <person name="Waters C."/>
            <person name="Tu K.C."/>
            <person name="Irgon J."/>
            <person name="Wilson R.K."/>
        </authorList>
    </citation>
    <scope>NUCLEOTIDE SEQUENCE [LARGE SCALE GENOMIC DNA]</scope>
    <source>
        <strain>ATCC BAA-1116 / BB120</strain>
    </source>
</reference>
<keyword id="KW-0963">Cytoplasm</keyword>
<keyword id="KW-0227">DNA damage</keyword>
<keyword id="KW-0234">DNA repair</keyword>
<keyword id="KW-0378">Hydrolase</keyword>
<sequence>MNQLPTWHDVIGEEKQQSYFVDTLNFVEAERAAGKAIYPPAKDVFNAFRFTEFNDVKVVILGQDPYHGPNQAHGLCFSVLPGIKTPPSLVNMYKELAQDIEGFQIPQHGFLQSWAEQGVLLLNTVLTVEQGKAHSHSKTGWETFTDRVIEAINQHQEGVVFLLWGSHAQKKGRFIDRNKHHVLTAPHPSPLSAHRGFFGSKPFSQANQILVQQGKEVINWHLPMTV</sequence>
<feature type="chain" id="PRO_1000009961" description="Uracil-DNA glycosylase">
    <location>
        <begin position="1"/>
        <end position="226"/>
    </location>
</feature>
<feature type="active site" description="Proton acceptor" evidence="1">
    <location>
        <position position="64"/>
    </location>
</feature>
<proteinExistence type="inferred from homology"/>
<comment type="function">
    <text evidence="1">Excises uracil residues from the DNA which can arise as a result of misincorporation of dUMP residues by DNA polymerase or due to deamination of cytosine.</text>
</comment>
<comment type="catalytic activity">
    <reaction evidence="1">
        <text>Hydrolyzes single-stranded DNA or mismatched double-stranded DNA and polynucleotides, releasing free uracil.</text>
        <dbReference type="EC" id="3.2.2.27"/>
    </reaction>
</comment>
<comment type="subcellular location">
    <subcellularLocation>
        <location evidence="1">Cytoplasm</location>
    </subcellularLocation>
</comment>
<comment type="similarity">
    <text evidence="1">Belongs to the uracil-DNA glycosylase (UDG) superfamily. UNG family.</text>
</comment>
<name>UNG_VIBC1</name>
<organism>
    <name type="scientific">Vibrio campbellii (strain ATCC BAA-1116)</name>
    <dbReference type="NCBI Taxonomy" id="2902295"/>
    <lineage>
        <taxon>Bacteria</taxon>
        <taxon>Pseudomonadati</taxon>
        <taxon>Pseudomonadota</taxon>
        <taxon>Gammaproteobacteria</taxon>
        <taxon>Vibrionales</taxon>
        <taxon>Vibrionaceae</taxon>
        <taxon>Vibrio</taxon>
    </lineage>
</organism>
<gene>
    <name evidence="1" type="primary">ung</name>
    <name type="ordered locus">VIBHAR_00945</name>
</gene>
<dbReference type="EC" id="3.2.2.27" evidence="1"/>
<dbReference type="EMBL" id="CP000789">
    <property type="protein sequence ID" value="ABU69944.1"/>
    <property type="molecule type" value="Genomic_DNA"/>
</dbReference>
<dbReference type="RefSeq" id="WP_012127020.1">
    <property type="nucleotide sequence ID" value="NC_022269.1"/>
</dbReference>
<dbReference type="SMR" id="A7MS85"/>
<dbReference type="GeneID" id="67378421"/>
<dbReference type="KEGG" id="vha:VIBHAR_00945"/>
<dbReference type="PATRIC" id="fig|338187.25.peg.1676"/>
<dbReference type="Proteomes" id="UP000008152">
    <property type="component" value="Chromosome I"/>
</dbReference>
<dbReference type="GO" id="GO:0005737">
    <property type="term" value="C:cytoplasm"/>
    <property type="evidence" value="ECO:0007669"/>
    <property type="project" value="UniProtKB-SubCell"/>
</dbReference>
<dbReference type="GO" id="GO:0004844">
    <property type="term" value="F:uracil DNA N-glycosylase activity"/>
    <property type="evidence" value="ECO:0007669"/>
    <property type="project" value="UniProtKB-UniRule"/>
</dbReference>
<dbReference type="GO" id="GO:0097510">
    <property type="term" value="P:base-excision repair, AP site formation via deaminated base removal"/>
    <property type="evidence" value="ECO:0007669"/>
    <property type="project" value="TreeGrafter"/>
</dbReference>
<dbReference type="CDD" id="cd10027">
    <property type="entry name" value="UDG-F1-like"/>
    <property type="match status" value="1"/>
</dbReference>
<dbReference type="FunFam" id="3.40.470.10:FF:000001">
    <property type="entry name" value="Uracil-DNA glycosylase"/>
    <property type="match status" value="1"/>
</dbReference>
<dbReference type="Gene3D" id="3.40.470.10">
    <property type="entry name" value="Uracil-DNA glycosylase-like domain"/>
    <property type="match status" value="1"/>
</dbReference>
<dbReference type="HAMAP" id="MF_00148">
    <property type="entry name" value="UDG"/>
    <property type="match status" value="1"/>
</dbReference>
<dbReference type="InterPro" id="IPR002043">
    <property type="entry name" value="UDG_fam1"/>
</dbReference>
<dbReference type="InterPro" id="IPR018085">
    <property type="entry name" value="Ura-DNA_Glyclase_AS"/>
</dbReference>
<dbReference type="InterPro" id="IPR005122">
    <property type="entry name" value="Uracil-DNA_glycosylase-like"/>
</dbReference>
<dbReference type="InterPro" id="IPR036895">
    <property type="entry name" value="Uracil-DNA_glycosylase-like_sf"/>
</dbReference>
<dbReference type="NCBIfam" id="NF003588">
    <property type="entry name" value="PRK05254.1-1"/>
    <property type="match status" value="1"/>
</dbReference>
<dbReference type="NCBIfam" id="NF003589">
    <property type="entry name" value="PRK05254.1-2"/>
    <property type="match status" value="1"/>
</dbReference>
<dbReference type="NCBIfam" id="NF003591">
    <property type="entry name" value="PRK05254.1-4"/>
    <property type="match status" value="1"/>
</dbReference>
<dbReference type="NCBIfam" id="NF003592">
    <property type="entry name" value="PRK05254.1-5"/>
    <property type="match status" value="1"/>
</dbReference>
<dbReference type="NCBIfam" id="TIGR00628">
    <property type="entry name" value="ung"/>
    <property type="match status" value="1"/>
</dbReference>
<dbReference type="PANTHER" id="PTHR11264">
    <property type="entry name" value="URACIL-DNA GLYCOSYLASE"/>
    <property type="match status" value="1"/>
</dbReference>
<dbReference type="PANTHER" id="PTHR11264:SF0">
    <property type="entry name" value="URACIL-DNA GLYCOSYLASE"/>
    <property type="match status" value="1"/>
</dbReference>
<dbReference type="Pfam" id="PF03167">
    <property type="entry name" value="UDG"/>
    <property type="match status" value="1"/>
</dbReference>
<dbReference type="SMART" id="SM00986">
    <property type="entry name" value="UDG"/>
    <property type="match status" value="1"/>
</dbReference>
<dbReference type="SMART" id="SM00987">
    <property type="entry name" value="UreE_C"/>
    <property type="match status" value="1"/>
</dbReference>
<dbReference type="SUPFAM" id="SSF52141">
    <property type="entry name" value="Uracil-DNA glycosylase-like"/>
    <property type="match status" value="1"/>
</dbReference>
<dbReference type="PROSITE" id="PS00130">
    <property type="entry name" value="U_DNA_GLYCOSYLASE"/>
    <property type="match status" value="1"/>
</dbReference>